<protein>
    <recommendedName>
        <fullName>tRNA methyltransferase 10 homolog A</fullName>
        <ecNumber evidence="1">2.1.1.221</ecNumber>
    </recommendedName>
    <alternativeName>
        <fullName>RNA (guanine-9-)-methyltransferase domain-containing protein 2</fullName>
    </alternativeName>
    <alternativeName>
        <fullName>tRNA (guanine(9)-N(1))-methyltransferase TRMT10A</fullName>
    </alternativeName>
</protein>
<sequence length="334" mass="38514">MSLEAVTEPGKCSIDPNTKDLLASQHAGNNTPLQENSSAPRSECKAQDAMSKRQMKKFLKQKQWEDQRELRKQKRKEKRQKRKLERQAQAEHNIDANSRKRFRHEVQPSALRLIIDCSFDDLMALRDVKKLNKQIRRCYAENRRAVHPVQLYLTSHGGQLKSNMDEYDKGWINWKDIHIKPEHYKDLIKKEDLVYLTSDSPEVLSELDETKAYIIGGLVDHNHHKGITYKKALELGISHAQLPLGNFVKMNTRKVLAVNHVFEIILAFLEKKEWKEAFFSVLPQRKGAIPLTETGEQPECRASEQEDGEDSDSDSSIDESATIQPSVRCEEQNS</sequence>
<name>TM10A_XENTR</name>
<organism>
    <name type="scientific">Xenopus tropicalis</name>
    <name type="common">Western clawed frog</name>
    <name type="synonym">Silurana tropicalis</name>
    <dbReference type="NCBI Taxonomy" id="8364"/>
    <lineage>
        <taxon>Eukaryota</taxon>
        <taxon>Metazoa</taxon>
        <taxon>Chordata</taxon>
        <taxon>Craniata</taxon>
        <taxon>Vertebrata</taxon>
        <taxon>Euteleostomi</taxon>
        <taxon>Amphibia</taxon>
        <taxon>Batrachia</taxon>
        <taxon>Anura</taxon>
        <taxon>Pipoidea</taxon>
        <taxon>Pipidae</taxon>
        <taxon>Xenopodinae</taxon>
        <taxon>Xenopus</taxon>
        <taxon>Silurana</taxon>
    </lineage>
</organism>
<proteinExistence type="evidence at transcript level"/>
<dbReference type="EC" id="2.1.1.221" evidence="1"/>
<dbReference type="EMBL" id="CR762095">
    <property type="protein sequence ID" value="CAJ81400.1"/>
    <property type="molecule type" value="mRNA"/>
</dbReference>
<dbReference type="EMBL" id="BC080890">
    <property type="protein sequence ID" value="AAH80890.1"/>
    <property type="molecule type" value="mRNA"/>
</dbReference>
<dbReference type="RefSeq" id="NP_001008012.1">
    <property type="nucleotide sequence ID" value="NM_001008011.1"/>
</dbReference>
<dbReference type="SMR" id="Q66JJ4"/>
<dbReference type="FunCoup" id="Q66JJ4">
    <property type="interactions" value="2955"/>
</dbReference>
<dbReference type="STRING" id="8364.ENSXETP00000048013"/>
<dbReference type="PaxDb" id="8364-ENSXETP00000026479"/>
<dbReference type="DNASU" id="493374"/>
<dbReference type="GeneID" id="493374"/>
<dbReference type="KEGG" id="xtr:493374"/>
<dbReference type="AGR" id="Xenbase:XB-GENE-942310"/>
<dbReference type="CTD" id="93587"/>
<dbReference type="Xenbase" id="XB-GENE-942310">
    <property type="gene designation" value="trmt10a"/>
</dbReference>
<dbReference type="eggNOG" id="KOG2967">
    <property type="taxonomic scope" value="Eukaryota"/>
</dbReference>
<dbReference type="HOGENOM" id="CLU_034384_7_0_1"/>
<dbReference type="InParanoid" id="Q66JJ4"/>
<dbReference type="OMA" id="FKKNDGW"/>
<dbReference type="OrthoDB" id="278300at2759"/>
<dbReference type="PhylomeDB" id="Q66JJ4"/>
<dbReference type="TreeFam" id="TF330972"/>
<dbReference type="Proteomes" id="UP000008143">
    <property type="component" value="Chromosome 5"/>
</dbReference>
<dbReference type="Bgee" id="ENSXETG00000012132">
    <property type="expression patterns" value="Expressed in ovary and 12 other cell types or tissues"/>
</dbReference>
<dbReference type="ExpressionAtlas" id="Q66JJ4">
    <property type="expression patterns" value="differential"/>
</dbReference>
<dbReference type="GO" id="GO:0052905">
    <property type="term" value="F:tRNA (guanosine(9)-N1)-methyltransferase activity"/>
    <property type="evidence" value="ECO:0007669"/>
    <property type="project" value="UniProtKB-EC"/>
</dbReference>
<dbReference type="GO" id="GO:0032259">
    <property type="term" value="P:methylation"/>
    <property type="evidence" value="ECO:0007669"/>
    <property type="project" value="UniProtKB-KW"/>
</dbReference>
<dbReference type="CDD" id="cd18101">
    <property type="entry name" value="Trm10euk_A"/>
    <property type="match status" value="1"/>
</dbReference>
<dbReference type="FunFam" id="3.40.1280.30:FF:000001">
    <property type="entry name" value="tRNA methyltransferase 10 homolog A"/>
    <property type="match status" value="1"/>
</dbReference>
<dbReference type="Gene3D" id="3.40.1280.30">
    <property type="match status" value="1"/>
</dbReference>
<dbReference type="InterPro" id="IPR028564">
    <property type="entry name" value="MT_TRM10-typ"/>
</dbReference>
<dbReference type="InterPro" id="IPR038459">
    <property type="entry name" value="MT_TRM10-typ_sf"/>
</dbReference>
<dbReference type="InterPro" id="IPR016653">
    <property type="entry name" value="TRM10/TRM10A"/>
</dbReference>
<dbReference type="InterPro" id="IPR007356">
    <property type="entry name" value="tRNA_m1G_MeTrfase_euk"/>
</dbReference>
<dbReference type="InterPro" id="IPR016009">
    <property type="entry name" value="tRNA_MeTrfase_TRMD/TRM10"/>
</dbReference>
<dbReference type="PANTHER" id="PTHR13563">
    <property type="entry name" value="TRNA (GUANINE-9-) METHYLTRANSFERASE"/>
    <property type="match status" value="1"/>
</dbReference>
<dbReference type="PANTHER" id="PTHR13563:SF13">
    <property type="entry name" value="TRNA METHYLTRANSFERASE 10 HOMOLOG A"/>
    <property type="match status" value="1"/>
</dbReference>
<dbReference type="Pfam" id="PF01746">
    <property type="entry name" value="tRNA_m1G_MT"/>
    <property type="match status" value="1"/>
</dbReference>
<dbReference type="PIRSF" id="PIRSF016323">
    <property type="entry name" value="tRNA_m1G_mtfrase_met"/>
    <property type="match status" value="1"/>
</dbReference>
<dbReference type="PROSITE" id="PS51675">
    <property type="entry name" value="SAM_MT_TRM10"/>
    <property type="match status" value="1"/>
</dbReference>
<accession>Q66JJ4</accession>
<keyword id="KW-0175">Coiled coil</keyword>
<keyword id="KW-0489">Methyltransferase</keyword>
<keyword id="KW-1185">Reference proteome</keyword>
<keyword id="KW-0949">S-adenosyl-L-methionine</keyword>
<keyword id="KW-0808">Transferase</keyword>
<feature type="chain" id="PRO_0000311318" description="tRNA methyltransferase 10 homolog A">
    <location>
        <begin position="1"/>
        <end position="334"/>
    </location>
</feature>
<feature type="domain" description="SAM-dependent MTase TRM10-type" evidence="3">
    <location>
        <begin position="98"/>
        <end position="289"/>
    </location>
</feature>
<feature type="region of interest" description="Disordered" evidence="4">
    <location>
        <begin position="1"/>
        <end position="101"/>
    </location>
</feature>
<feature type="region of interest" description="Disordered" evidence="4">
    <location>
        <begin position="290"/>
        <end position="334"/>
    </location>
</feature>
<feature type="coiled-coil region" evidence="2">
    <location>
        <begin position="62"/>
        <end position="94"/>
    </location>
</feature>
<feature type="compositionally biased region" description="Polar residues" evidence="4">
    <location>
        <begin position="26"/>
        <end position="40"/>
    </location>
</feature>
<feature type="compositionally biased region" description="Basic residues" evidence="4">
    <location>
        <begin position="71"/>
        <end position="84"/>
    </location>
</feature>
<feature type="compositionally biased region" description="Basic and acidic residues" evidence="4">
    <location>
        <begin position="85"/>
        <end position="98"/>
    </location>
</feature>
<feature type="compositionally biased region" description="Acidic residues" evidence="4">
    <location>
        <begin position="305"/>
        <end position="317"/>
    </location>
</feature>
<evidence type="ECO:0000250" key="1">
    <source>
        <dbReference type="UniProtKB" id="Q8TBZ6"/>
    </source>
</evidence>
<evidence type="ECO:0000255" key="2"/>
<evidence type="ECO:0000255" key="3">
    <source>
        <dbReference type="PROSITE-ProRule" id="PRU01012"/>
    </source>
</evidence>
<evidence type="ECO:0000256" key="4">
    <source>
        <dbReference type="SAM" id="MobiDB-lite"/>
    </source>
</evidence>
<gene>
    <name type="primary">trmt10a</name>
    <name type="synonym">rg9mtd2</name>
    <name type="ORF">TEgg011a17.1</name>
</gene>
<reference key="1">
    <citation type="submission" date="2006-10" db="EMBL/GenBank/DDBJ databases">
        <authorList>
            <consortium name="Sanger Xenopus tropicalis EST/cDNA project"/>
        </authorList>
    </citation>
    <scope>NUCLEOTIDE SEQUENCE [LARGE SCALE MRNA]</scope>
    <source>
        <tissue>Egg</tissue>
    </source>
</reference>
<reference key="2">
    <citation type="submission" date="2004-08" db="EMBL/GenBank/DDBJ databases">
        <authorList>
            <consortium name="NIH - Xenopus Gene Collection (XGC) project"/>
        </authorList>
    </citation>
    <scope>NUCLEOTIDE SEQUENCE [LARGE SCALE MRNA]</scope>
    <source>
        <tissue>Embryo</tissue>
    </source>
</reference>
<comment type="function">
    <text evidence="1">S-adenosyl-L-methionine-dependent guanine N(1)-methyltransferase that catalyzes the formation of N(1)-methylguanine at position 9 (m1G9) in tRNAs. Probably not able to catalyze formation of N(1)-methyladenine at position 9 (m1A9) in tRNAs.</text>
</comment>
<comment type="catalytic activity">
    <reaction evidence="1">
        <text>guanosine(9) in tRNA + S-adenosyl-L-methionine = N(1)-methylguanosine(9) in tRNA + S-adenosyl-L-homocysteine + H(+)</text>
        <dbReference type="Rhea" id="RHEA:43156"/>
        <dbReference type="Rhea" id="RHEA-COMP:10367"/>
        <dbReference type="Rhea" id="RHEA-COMP:10368"/>
        <dbReference type="ChEBI" id="CHEBI:15378"/>
        <dbReference type="ChEBI" id="CHEBI:57856"/>
        <dbReference type="ChEBI" id="CHEBI:59789"/>
        <dbReference type="ChEBI" id="CHEBI:73542"/>
        <dbReference type="ChEBI" id="CHEBI:74269"/>
        <dbReference type="EC" id="2.1.1.221"/>
    </reaction>
</comment>
<comment type="similarity">
    <text evidence="3">Belongs to the class IV-like SAM-binding methyltransferase superfamily. TRM10 family.</text>
</comment>